<gene>
    <name evidence="1" type="primary">rpmJ</name>
    <name type="ordered locus">LJ_0358.1</name>
    <name type="ORF">LJ_0358b</name>
</gene>
<sequence>MKVRPSVKPMCEHCKIIKRQGRVMVICSANPKHKQRQG</sequence>
<proteinExistence type="inferred from homology"/>
<name>RL36_LACJO</name>
<accession>Q74L67</accession>
<evidence type="ECO:0000255" key="1">
    <source>
        <dbReference type="HAMAP-Rule" id="MF_00251"/>
    </source>
</evidence>
<evidence type="ECO:0000305" key="2"/>
<reference key="1">
    <citation type="journal article" date="2004" name="Proc. Natl. Acad. Sci. U.S.A.">
        <title>The genome sequence of the probiotic intestinal bacterium Lactobacillus johnsonii NCC 533.</title>
        <authorList>
            <person name="Pridmore R.D."/>
            <person name="Berger B."/>
            <person name="Desiere F."/>
            <person name="Vilanova D."/>
            <person name="Barretto C."/>
            <person name="Pittet A.-C."/>
            <person name="Zwahlen M.-C."/>
            <person name="Rouvet M."/>
            <person name="Altermann E."/>
            <person name="Barrangou R."/>
            <person name="Mollet B."/>
            <person name="Mercenier A."/>
            <person name="Klaenhammer T."/>
            <person name="Arigoni F."/>
            <person name="Schell M.A."/>
        </authorList>
    </citation>
    <scope>NUCLEOTIDE SEQUENCE [LARGE SCALE GENOMIC DNA]</scope>
    <source>
        <strain>CNCM I-1225 / La1 / NCC 533</strain>
    </source>
</reference>
<dbReference type="EMBL" id="AE017198">
    <property type="protein sequence ID" value="AAS08348.1"/>
    <property type="molecule type" value="Genomic_DNA"/>
</dbReference>
<dbReference type="SMR" id="Q74L67"/>
<dbReference type="KEGG" id="ljo:LJ_0358b"/>
<dbReference type="eggNOG" id="COG0257">
    <property type="taxonomic scope" value="Bacteria"/>
</dbReference>
<dbReference type="HOGENOM" id="CLU_135723_6_2_9"/>
<dbReference type="Proteomes" id="UP000000581">
    <property type="component" value="Chromosome"/>
</dbReference>
<dbReference type="GO" id="GO:0005737">
    <property type="term" value="C:cytoplasm"/>
    <property type="evidence" value="ECO:0007669"/>
    <property type="project" value="UniProtKB-ARBA"/>
</dbReference>
<dbReference type="GO" id="GO:1990904">
    <property type="term" value="C:ribonucleoprotein complex"/>
    <property type="evidence" value="ECO:0007669"/>
    <property type="project" value="UniProtKB-KW"/>
</dbReference>
<dbReference type="GO" id="GO:0005840">
    <property type="term" value="C:ribosome"/>
    <property type="evidence" value="ECO:0007669"/>
    <property type="project" value="UniProtKB-KW"/>
</dbReference>
<dbReference type="GO" id="GO:0003735">
    <property type="term" value="F:structural constituent of ribosome"/>
    <property type="evidence" value="ECO:0007669"/>
    <property type="project" value="InterPro"/>
</dbReference>
<dbReference type="GO" id="GO:0006412">
    <property type="term" value="P:translation"/>
    <property type="evidence" value="ECO:0007669"/>
    <property type="project" value="UniProtKB-UniRule"/>
</dbReference>
<dbReference type="HAMAP" id="MF_00251">
    <property type="entry name" value="Ribosomal_bL36"/>
    <property type="match status" value="1"/>
</dbReference>
<dbReference type="InterPro" id="IPR000473">
    <property type="entry name" value="Ribosomal_bL36"/>
</dbReference>
<dbReference type="InterPro" id="IPR035977">
    <property type="entry name" value="Ribosomal_bL36_sp"/>
</dbReference>
<dbReference type="NCBIfam" id="TIGR01022">
    <property type="entry name" value="rpmJ_bact"/>
    <property type="match status" value="1"/>
</dbReference>
<dbReference type="PANTHER" id="PTHR42888">
    <property type="entry name" value="50S RIBOSOMAL PROTEIN L36, CHLOROPLASTIC"/>
    <property type="match status" value="1"/>
</dbReference>
<dbReference type="PANTHER" id="PTHR42888:SF1">
    <property type="entry name" value="LARGE RIBOSOMAL SUBUNIT PROTEIN BL36C"/>
    <property type="match status" value="1"/>
</dbReference>
<dbReference type="Pfam" id="PF00444">
    <property type="entry name" value="Ribosomal_L36"/>
    <property type="match status" value="1"/>
</dbReference>
<dbReference type="SUPFAM" id="SSF57840">
    <property type="entry name" value="Ribosomal protein L36"/>
    <property type="match status" value="1"/>
</dbReference>
<dbReference type="PROSITE" id="PS00828">
    <property type="entry name" value="RIBOSOMAL_L36"/>
    <property type="match status" value="1"/>
</dbReference>
<keyword id="KW-0687">Ribonucleoprotein</keyword>
<keyword id="KW-0689">Ribosomal protein</keyword>
<feature type="chain" id="PRO_0000126196" description="Large ribosomal subunit protein bL36">
    <location>
        <begin position="1"/>
        <end position="38"/>
    </location>
</feature>
<organism>
    <name type="scientific">Lactobacillus johnsonii (strain CNCM I-12250 / La1 / NCC 533)</name>
    <dbReference type="NCBI Taxonomy" id="257314"/>
    <lineage>
        <taxon>Bacteria</taxon>
        <taxon>Bacillati</taxon>
        <taxon>Bacillota</taxon>
        <taxon>Bacilli</taxon>
        <taxon>Lactobacillales</taxon>
        <taxon>Lactobacillaceae</taxon>
        <taxon>Lactobacillus</taxon>
    </lineage>
</organism>
<comment type="similarity">
    <text evidence="1">Belongs to the bacterial ribosomal protein bL36 family.</text>
</comment>
<protein>
    <recommendedName>
        <fullName evidence="1">Large ribosomal subunit protein bL36</fullName>
    </recommendedName>
    <alternativeName>
        <fullName evidence="2">50S ribosomal protein L36</fullName>
    </alternativeName>
</protein>